<sequence>PIAGSMVLAAILLKLGGYGIIRMMQILPTTKTDLFLPFMVLALWGAILANLTCLQQTDLKSLIAYSSISHMGLVVAAIIIQTPWGLSGAMALMIAHGFTSSALFCLANTTYERTHTRILILTRGLHNILPMATTWWLLTNLMNIATPPTMNFTSELLIMSALFNWCPTTIIMLGLSMLITASYSLHMFLSTQMGSALTNNQTEPTHSREHLLITLHIIPLVMVSLKPELII</sequence>
<protein>
    <recommendedName>
        <fullName>NADH-ubiquinone oxidoreductase chain 4</fullName>
        <ecNumber>7.1.1.2</ecNumber>
    </recommendedName>
    <alternativeName>
        <fullName>NADH dehydrogenase subunit 4</fullName>
    </alternativeName>
</protein>
<organism>
    <name type="scientific">Ovophis okinavensis</name>
    <name type="common">Ryukyu Island pit viper</name>
    <name type="synonym">Trimeresurus okinavensis</name>
    <dbReference type="NCBI Taxonomy" id="8769"/>
    <lineage>
        <taxon>Eukaryota</taxon>
        <taxon>Metazoa</taxon>
        <taxon>Chordata</taxon>
        <taxon>Craniata</taxon>
        <taxon>Vertebrata</taxon>
        <taxon>Euteleostomi</taxon>
        <taxon>Lepidosauria</taxon>
        <taxon>Squamata</taxon>
        <taxon>Bifurcata</taxon>
        <taxon>Unidentata</taxon>
        <taxon>Episquamata</taxon>
        <taxon>Toxicofera</taxon>
        <taxon>Serpentes</taxon>
        <taxon>Colubroidea</taxon>
        <taxon>Viperidae</taxon>
        <taxon>Crotalinae</taxon>
        <taxon>Ovophis</taxon>
    </lineage>
</organism>
<geneLocation type="mitochondrion"/>
<dbReference type="EC" id="7.1.1.2"/>
<dbReference type="EMBL" id="U41895">
    <property type="protein sequence ID" value="AAB46646.1"/>
    <property type="molecule type" value="Genomic_DNA"/>
</dbReference>
<dbReference type="SMR" id="P92681"/>
<dbReference type="GO" id="GO:0031966">
    <property type="term" value="C:mitochondrial membrane"/>
    <property type="evidence" value="ECO:0007669"/>
    <property type="project" value="UniProtKB-SubCell"/>
</dbReference>
<dbReference type="GO" id="GO:0008137">
    <property type="term" value="F:NADH dehydrogenase (ubiquinone) activity"/>
    <property type="evidence" value="ECO:0007669"/>
    <property type="project" value="UniProtKB-EC"/>
</dbReference>
<dbReference type="GO" id="GO:0048039">
    <property type="term" value="F:ubiquinone binding"/>
    <property type="evidence" value="ECO:0007669"/>
    <property type="project" value="TreeGrafter"/>
</dbReference>
<dbReference type="GO" id="GO:0042773">
    <property type="term" value="P:ATP synthesis coupled electron transport"/>
    <property type="evidence" value="ECO:0007669"/>
    <property type="project" value="InterPro"/>
</dbReference>
<dbReference type="GO" id="GO:0015990">
    <property type="term" value="P:electron transport coupled proton transport"/>
    <property type="evidence" value="ECO:0007669"/>
    <property type="project" value="TreeGrafter"/>
</dbReference>
<dbReference type="InterPro" id="IPR003918">
    <property type="entry name" value="NADH_UbQ_OxRdtase"/>
</dbReference>
<dbReference type="InterPro" id="IPR001750">
    <property type="entry name" value="ND/Mrp_TM"/>
</dbReference>
<dbReference type="PANTHER" id="PTHR43507">
    <property type="entry name" value="NADH-UBIQUINONE OXIDOREDUCTASE CHAIN 4"/>
    <property type="match status" value="1"/>
</dbReference>
<dbReference type="PANTHER" id="PTHR43507:SF20">
    <property type="entry name" value="NADH-UBIQUINONE OXIDOREDUCTASE CHAIN 4"/>
    <property type="match status" value="1"/>
</dbReference>
<dbReference type="Pfam" id="PF00361">
    <property type="entry name" value="Proton_antipo_M"/>
    <property type="match status" value="1"/>
</dbReference>
<gene>
    <name type="primary">MT-ND4</name>
    <name type="synonym">MTND4</name>
    <name type="synonym">NADH4</name>
    <name type="synonym">ND4</name>
</gene>
<feature type="chain" id="PRO_0000117999" description="NADH-ubiquinone oxidoreductase chain 4">
    <location>
        <begin position="1" status="less than"/>
        <end position="231" status="greater than"/>
    </location>
</feature>
<feature type="transmembrane region" description="Helical" evidence="2">
    <location>
        <begin position="1"/>
        <end position="21"/>
    </location>
</feature>
<feature type="transmembrane region" description="Helical" evidence="2">
    <location>
        <begin position="34"/>
        <end position="54"/>
    </location>
</feature>
<feature type="transmembrane region" description="Helical" evidence="2">
    <location>
        <begin position="63"/>
        <end position="85"/>
    </location>
</feature>
<feature type="transmembrane region" description="Helical" evidence="2">
    <location>
        <begin position="89"/>
        <end position="111"/>
    </location>
</feature>
<feature type="transmembrane region" description="Helical" evidence="2">
    <location>
        <begin position="118"/>
        <end position="138"/>
    </location>
</feature>
<feature type="transmembrane region" description="Helical" evidence="2">
    <location>
        <begin position="156"/>
        <end position="176"/>
    </location>
</feature>
<feature type="non-terminal residue">
    <location>
        <position position="1"/>
    </location>
</feature>
<feature type="non-terminal residue">
    <location>
        <position position="231"/>
    </location>
</feature>
<proteinExistence type="inferred from homology"/>
<comment type="function">
    <text evidence="1">Core subunit of the mitochondrial membrane respiratory chain NADH dehydrogenase (Complex I) that is believed to belong to the minimal assembly required for catalysis. Complex I functions in the transfer of electrons from NADH to the respiratory chain. The immediate electron acceptor for the enzyme is believed to be ubiquinone (By similarity).</text>
</comment>
<comment type="catalytic activity">
    <reaction>
        <text>a ubiquinone + NADH + 5 H(+)(in) = a ubiquinol + NAD(+) + 4 H(+)(out)</text>
        <dbReference type="Rhea" id="RHEA:29091"/>
        <dbReference type="Rhea" id="RHEA-COMP:9565"/>
        <dbReference type="Rhea" id="RHEA-COMP:9566"/>
        <dbReference type="ChEBI" id="CHEBI:15378"/>
        <dbReference type="ChEBI" id="CHEBI:16389"/>
        <dbReference type="ChEBI" id="CHEBI:17976"/>
        <dbReference type="ChEBI" id="CHEBI:57540"/>
        <dbReference type="ChEBI" id="CHEBI:57945"/>
        <dbReference type="EC" id="7.1.1.2"/>
    </reaction>
</comment>
<comment type="subcellular location">
    <subcellularLocation>
        <location evidence="1">Mitochondrion membrane</location>
        <topology evidence="1">Multi-pass membrane protein</topology>
    </subcellularLocation>
</comment>
<comment type="similarity">
    <text evidence="3">Belongs to the complex I subunit 4 family.</text>
</comment>
<reference key="1">
    <citation type="journal article" date="1996" name="Copeia">
        <title>Crotaline intergeneric relationships based on mitochondrial DNA sequence data.</title>
        <authorList>
            <person name="Kraus F."/>
            <person name="Mink D.G."/>
            <person name="Brown W.M."/>
        </authorList>
    </citation>
    <scope>NUCLEOTIDE SEQUENCE [GENOMIC DNA]</scope>
</reference>
<accession>P92681</accession>
<name>NU4M_OVOOK</name>
<keyword id="KW-0249">Electron transport</keyword>
<keyword id="KW-0472">Membrane</keyword>
<keyword id="KW-0496">Mitochondrion</keyword>
<keyword id="KW-0520">NAD</keyword>
<keyword id="KW-0679">Respiratory chain</keyword>
<keyword id="KW-1278">Translocase</keyword>
<keyword id="KW-0812">Transmembrane</keyword>
<keyword id="KW-1133">Transmembrane helix</keyword>
<keyword id="KW-0813">Transport</keyword>
<keyword id="KW-0830">Ubiquinone</keyword>
<evidence type="ECO:0000250" key="1"/>
<evidence type="ECO:0000255" key="2"/>
<evidence type="ECO:0000305" key="3"/>